<sequence>MTLQQEIIQALGAKSYINPEEEIRRSVDFLKAYLKTYPFLKSLVLGISGGQDSTLAGKLSQMAISELREETDDDALQFIAVRLPYGVQADEQDCQDAIAFIKPDRVLTVNIKGAVLASEQALREAGIELSDFVRGNEKARERMKAQYSIAGMTHGVVVGTDHAAEAITGFFTKYGDGGTDINPLHRLNKRQGKQLLAALGCPEHLYKKVPTADLEDDRPSLPDEAALGVTYDNIDDYLEGKTLAPAIAKIIEGWYVKTEHKRRLPITVFDDFWKK</sequence>
<name>NADE_SALAR</name>
<dbReference type="EC" id="6.3.1.5" evidence="1"/>
<dbReference type="EMBL" id="CP000880">
    <property type="protein sequence ID" value="ABX21559.1"/>
    <property type="molecule type" value="Genomic_DNA"/>
</dbReference>
<dbReference type="SMR" id="A9MFF4"/>
<dbReference type="STRING" id="41514.SARI_01668"/>
<dbReference type="KEGG" id="ses:SARI_01668"/>
<dbReference type="HOGENOM" id="CLU_059327_3_0_6"/>
<dbReference type="UniPathway" id="UPA00253">
    <property type="reaction ID" value="UER00333"/>
</dbReference>
<dbReference type="Proteomes" id="UP000002084">
    <property type="component" value="Chromosome"/>
</dbReference>
<dbReference type="GO" id="GO:0005737">
    <property type="term" value="C:cytoplasm"/>
    <property type="evidence" value="ECO:0007669"/>
    <property type="project" value="InterPro"/>
</dbReference>
<dbReference type="GO" id="GO:0005524">
    <property type="term" value="F:ATP binding"/>
    <property type="evidence" value="ECO:0007669"/>
    <property type="project" value="UniProtKB-UniRule"/>
</dbReference>
<dbReference type="GO" id="GO:0004359">
    <property type="term" value="F:glutaminase activity"/>
    <property type="evidence" value="ECO:0007669"/>
    <property type="project" value="InterPro"/>
</dbReference>
<dbReference type="GO" id="GO:0046872">
    <property type="term" value="F:metal ion binding"/>
    <property type="evidence" value="ECO:0007669"/>
    <property type="project" value="UniProtKB-KW"/>
</dbReference>
<dbReference type="GO" id="GO:0003952">
    <property type="term" value="F:NAD+ synthase (glutamine-hydrolyzing) activity"/>
    <property type="evidence" value="ECO:0007669"/>
    <property type="project" value="InterPro"/>
</dbReference>
<dbReference type="GO" id="GO:0008795">
    <property type="term" value="F:NAD+ synthase activity"/>
    <property type="evidence" value="ECO:0007669"/>
    <property type="project" value="UniProtKB-UniRule"/>
</dbReference>
<dbReference type="GO" id="GO:0009435">
    <property type="term" value="P:NAD biosynthetic process"/>
    <property type="evidence" value="ECO:0007669"/>
    <property type="project" value="UniProtKB-UniRule"/>
</dbReference>
<dbReference type="CDD" id="cd00553">
    <property type="entry name" value="NAD_synthase"/>
    <property type="match status" value="1"/>
</dbReference>
<dbReference type="FunFam" id="3.40.50.620:FF:000015">
    <property type="entry name" value="NH(3)-dependent NAD(+) synthetase"/>
    <property type="match status" value="1"/>
</dbReference>
<dbReference type="Gene3D" id="3.40.50.620">
    <property type="entry name" value="HUPs"/>
    <property type="match status" value="1"/>
</dbReference>
<dbReference type="HAMAP" id="MF_00193">
    <property type="entry name" value="NadE_ammonia_dep"/>
    <property type="match status" value="1"/>
</dbReference>
<dbReference type="InterPro" id="IPR022310">
    <property type="entry name" value="NAD/GMP_synthase"/>
</dbReference>
<dbReference type="InterPro" id="IPR003694">
    <property type="entry name" value="NAD_synthase"/>
</dbReference>
<dbReference type="InterPro" id="IPR022926">
    <property type="entry name" value="NH(3)-dep_NAD(+)_synth"/>
</dbReference>
<dbReference type="InterPro" id="IPR014729">
    <property type="entry name" value="Rossmann-like_a/b/a_fold"/>
</dbReference>
<dbReference type="NCBIfam" id="TIGR00552">
    <property type="entry name" value="nadE"/>
    <property type="match status" value="1"/>
</dbReference>
<dbReference type="NCBIfam" id="NF001979">
    <property type="entry name" value="PRK00768.1"/>
    <property type="match status" value="1"/>
</dbReference>
<dbReference type="PANTHER" id="PTHR23090">
    <property type="entry name" value="NH 3 /GLUTAMINE-DEPENDENT NAD + SYNTHETASE"/>
    <property type="match status" value="1"/>
</dbReference>
<dbReference type="PANTHER" id="PTHR23090:SF7">
    <property type="entry name" value="NH(3)-DEPENDENT NAD(+) SYNTHETASE"/>
    <property type="match status" value="1"/>
</dbReference>
<dbReference type="Pfam" id="PF02540">
    <property type="entry name" value="NAD_synthase"/>
    <property type="match status" value="1"/>
</dbReference>
<dbReference type="SUPFAM" id="SSF52402">
    <property type="entry name" value="Adenine nucleotide alpha hydrolases-like"/>
    <property type="match status" value="1"/>
</dbReference>
<keyword id="KW-0067">ATP-binding</keyword>
<keyword id="KW-0436">Ligase</keyword>
<keyword id="KW-0460">Magnesium</keyword>
<keyword id="KW-0479">Metal-binding</keyword>
<keyword id="KW-0520">NAD</keyword>
<keyword id="KW-0547">Nucleotide-binding</keyword>
<keyword id="KW-1185">Reference proteome</keyword>
<proteinExistence type="inferred from homology"/>
<accession>A9MFF4</accession>
<feature type="chain" id="PRO_1000077593" description="NH(3)-dependent NAD(+) synthetase">
    <location>
        <begin position="1"/>
        <end position="275"/>
    </location>
</feature>
<feature type="binding site" evidence="1">
    <location>
        <begin position="46"/>
        <end position="53"/>
    </location>
    <ligand>
        <name>ATP</name>
        <dbReference type="ChEBI" id="CHEBI:30616"/>
    </ligand>
</feature>
<feature type="binding site" evidence="1">
    <location>
        <position position="52"/>
    </location>
    <ligand>
        <name>Mg(2+)</name>
        <dbReference type="ChEBI" id="CHEBI:18420"/>
    </ligand>
</feature>
<feature type="binding site" evidence="1">
    <location>
        <position position="140"/>
    </location>
    <ligand>
        <name>deamido-NAD(+)</name>
        <dbReference type="ChEBI" id="CHEBI:58437"/>
    </ligand>
</feature>
<feature type="binding site" evidence="1">
    <location>
        <position position="160"/>
    </location>
    <ligand>
        <name>ATP</name>
        <dbReference type="ChEBI" id="CHEBI:30616"/>
    </ligand>
</feature>
<feature type="binding site" evidence="1">
    <location>
        <position position="165"/>
    </location>
    <ligand>
        <name>Mg(2+)</name>
        <dbReference type="ChEBI" id="CHEBI:18420"/>
    </ligand>
</feature>
<feature type="binding site" evidence="1">
    <location>
        <position position="173"/>
    </location>
    <ligand>
        <name>deamido-NAD(+)</name>
        <dbReference type="ChEBI" id="CHEBI:58437"/>
    </ligand>
</feature>
<feature type="binding site" evidence="1">
    <location>
        <position position="180"/>
    </location>
    <ligand>
        <name>deamido-NAD(+)</name>
        <dbReference type="ChEBI" id="CHEBI:58437"/>
    </ligand>
</feature>
<feature type="binding site" evidence="1">
    <location>
        <position position="189"/>
    </location>
    <ligand>
        <name>ATP</name>
        <dbReference type="ChEBI" id="CHEBI:30616"/>
    </ligand>
</feature>
<feature type="binding site" evidence="1">
    <location>
        <position position="211"/>
    </location>
    <ligand>
        <name>ATP</name>
        <dbReference type="ChEBI" id="CHEBI:30616"/>
    </ligand>
</feature>
<feature type="binding site" evidence="1">
    <location>
        <begin position="260"/>
        <end position="261"/>
    </location>
    <ligand>
        <name>deamido-NAD(+)</name>
        <dbReference type="ChEBI" id="CHEBI:58437"/>
    </ligand>
</feature>
<protein>
    <recommendedName>
        <fullName evidence="1">NH(3)-dependent NAD(+) synthetase</fullName>
        <ecNumber evidence="1">6.3.1.5</ecNumber>
    </recommendedName>
</protein>
<gene>
    <name evidence="1" type="primary">nadE</name>
    <name type="ordered locus">SARI_01668</name>
</gene>
<comment type="function">
    <text evidence="1">Catalyzes the ATP-dependent amidation of deamido-NAD to form NAD. Uses ammonia as a nitrogen source.</text>
</comment>
<comment type="catalytic activity">
    <reaction evidence="1">
        <text>deamido-NAD(+) + NH4(+) + ATP = AMP + diphosphate + NAD(+) + H(+)</text>
        <dbReference type="Rhea" id="RHEA:21188"/>
        <dbReference type="ChEBI" id="CHEBI:15378"/>
        <dbReference type="ChEBI" id="CHEBI:28938"/>
        <dbReference type="ChEBI" id="CHEBI:30616"/>
        <dbReference type="ChEBI" id="CHEBI:33019"/>
        <dbReference type="ChEBI" id="CHEBI:57540"/>
        <dbReference type="ChEBI" id="CHEBI:58437"/>
        <dbReference type="ChEBI" id="CHEBI:456215"/>
        <dbReference type="EC" id="6.3.1.5"/>
    </reaction>
</comment>
<comment type="pathway">
    <text evidence="1">Cofactor biosynthesis; NAD(+) biosynthesis; NAD(+) from deamido-NAD(+) (ammonia route): step 1/1.</text>
</comment>
<comment type="subunit">
    <text evidence="1">Homodimer.</text>
</comment>
<comment type="similarity">
    <text evidence="1">Belongs to the NAD synthetase family.</text>
</comment>
<evidence type="ECO:0000255" key="1">
    <source>
        <dbReference type="HAMAP-Rule" id="MF_00193"/>
    </source>
</evidence>
<organism>
    <name type="scientific">Salmonella arizonae (strain ATCC BAA-731 / CDC346-86 / RSK2980)</name>
    <dbReference type="NCBI Taxonomy" id="41514"/>
    <lineage>
        <taxon>Bacteria</taxon>
        <taxon>Pseudomonadati</taxon>
        <taxon>Pseudomonadota</taxon>
        <taxon>Gammaproteobacteria</taxon>
        <taxon>Enterobacterales</taxon>
        <taxon>Enterobacteriaceae</taxon>
        <taxon>Salmonella</taxon>
    </lineage>
</organism>
<reference key="1">
    <citation type="submission" date="2007-11" db="EMBL/GenBank/DDBJ databases">
        <authorList>
            <consortium name="The Salmonella enterica serovar Arizonae Genome Sequencing Project"/>
            <person name="McClelland M."/>
            <person name="Sanderson E.K."/>
            <person name="Porwollik S."/>
            <person name="Spieth J."/>
            <person name="Clifton W.S."/>
            <person name="Fulton R."/>
            <person name="Chunyan W."/>
            <person name="Wollam A."/>
            <person name="Shah N."/>
            <person name="Pepin K."/>
            <person name="Bhonagiri V."/>
            <person name="Nash W."/>
            <person name="Johnson M."/>
            <person name="Thiruvilangam P."/>
            <person name="Wilson R."/>
        </authorList>
    </citation>
    <scope>NUCLEOTIDE SEQUENCE [LARGE SCALE GENOMIC DNA]</scope>
    <source>
        <strain>ATCC BAA-731 / CDC346-86 / RSK2980</strain>
    </source>
</reference>